<name>SYV_NOSS1</name>
<evidence type="ECO:0000255" key="1">
    <source>
        <dbReference type="HAMAP-Rule" id="MF_02004"/>
    </source>
</evidence>
<feature type="chain" id="PRO_0000224428" description="Valine--tRNA ligase">
    <location>
        <begin position="1"/>
        <end position="1014"/>
    </location>
</feature>
<feature type="coiled-coil region" evidence="1">
    <location>
        <begin position="947"/>
        <end position="1014"/>
    </location>
</feature>
<feature type="short sequence motif" description="'HIGH' region">
    <location>
        <begin position="49"/>
        <end position="59"/>
    </location>
</feature>
<feature type="short sequence motif" description="'KMSKS' region">
    <location>
        <begin position="542"/>
        <end position="546"/>
    </location>
</feature>
<feature type="binding site" evidence="1">
    <location>
        <position position="545"/>
    </location>
    <ligand>
        <name>ATP</name>
        <dbReference type="ChEBI" id="CHEBI:30616"/>
    </ligand>
</feature>
<reference key="1">
    <citation type="journal article" date="2001" name="DNA Res.">
        <title>Complete genomic sequence of the filamentous nitrogen-fixing cyanobacterium Anabaena sp. strain PCC 7120.</title>
        <authorList>
            <person name="Kaneko T."/>
            <person name="Nakamura Y."/>
            <person name="Wolk C.P."/>
            <person name="Kuritz T."/>
            <person name="Sasamoto S."/>
            <person name="Watanabe A."/>
            <person name="Iriguchi M."/>
            <person name="Ishikawa A."/>
            <person name="Kawashima K."/>
            <person name="Kimura T."/>
            <person name="Kishida Y."/>
            <person name="Kohara M."/>
            <person name="Matsumoto M."/>
            <person name="Matsuno A."/>
            <person name="Muraki A."/>
            <person name="Nakazaki N."/>
            <person name="Shimpo S."/>
            <person name="Sugimoto M."/>
            <person name="Takazawa M."/>
            <person name="Yamada M."/>
            <person name="Yasuda M."/>
            <person name="Tabata S."/>
        </authorList>
    </citation>
    <scope>NUCLEOTIDE SEQUENCE [LARGE SCALE GENOMIC DNA]</scope>
    <source>
        <strain>PCC 7120 / SAG 25.82 / UTEX 2576</strain>
    </source>
</reference>
<organism>
    <name type="scientific">Nostoc sp. (strain PCC 7120 / SAG 25.82 / UTEX 2576)</name>
    <dbReference type="NCBI Taxonomy" id="103690"/>
    <lineage>
        <taxon>Bacteria</taxon>
        <taxon>Bacillati</taxon>
        <taxon>Cyanobacteriota</taxon>
        <taxon>Cyanophyceae</taxon>
        <taxon>Nostocales</taxon>
        <taxon>Nostocaceae</taxon>
        <taxon>Nostoc</taxon>
    </lineage>
</organism>
<comment type="function">
    <text evidence="1">Catalyzes the attachment of valine to tRNA(Val). As ValRS can inadvertently accommodate and process structurally similar amino acids such as threonine, to avoid such errors, it has a 'posttransfer' editing activity that hydrolyzes mischarged Thr-tRNA(Val) in a tRNA-dependent manner.</text>
</comment>
<comment type="catalytic activity">
    <reaction evidence="1">
        <text>tRNA(Val) + L-valine + ATP = L-valyl-tRNA(Val) + AMP + diphosphate</text>
        <dbReference type="Rhea" id="RHEA:10704"/>
        <dbReference type="Rhea" id="RHEA-COMP:9672"/>
        <dbReference type="Rhea" id="RHEA-COMP:9708"/>
        <dbReference type="ChEBI" id="CHEBI:30616"/>
        <dbReference type="ChEBI" id="CHEBI:33019"/>
        <dbReference type="ChEBI" id="CHEBI:57762"/>
        <dbReference type="ChEBI" id="CHEBI:78442"/>
        <dbReference type="ChEBI" id="CHEBI:78537"/>
        <dbReference type="ChEBI" id="CHEBI:456215"/>
        <dbReference type="EC" id="6.1.1.9"/>
    </reaction>
</comment>
<comment type="subunit">
    <text evidence="1">Monomer.</text>
</comment>
<comment type="subcellular location">
    <subcellularLocation>
        <location evidence="1">Cytoplasm</location>
    </subcellularLocation>
</comment>
<comment type="domain">
    <text evidence="1">ValRS has two distinct active sites: one for aminoacylation and one for editing. The misactivated threonine is translocated from the active site to the editing site.</text>
</comment>
<comment type="domain">
    <text evidence="1">The C-terminal coiled-coil domain is crucial for aminoacylation activity.</text>
</comment>
<comment type="similarity">
    <text evidence="1">Belongs to the class-I aminoacyl-tRNA synthetase family. ValS type 1 subfamily.</text>
</comment>
<proteinExistence type="inferred from homology"/>
<dbReference type="EC" id="6.1.1.9" evidence="1"/>
<dbReference type="EMBL" id="BA000019">
    <property type="protein sequence ID" value="BAB73275.1"/>
    <property type="molecule type" value="Genomic_DNA"/>
</dbReference>
<dbReference type="PIR" id="AC1971">
    <property type="entry name" value="AC1971"/>
</dbReference>
<dbReference type="RefSeq" id="WP_010995490.1">
    <property type="nucleotide sequence ID" value="NZ_RSCN01000060.1"/>
</dbReference>
<dbReference type="SMR" id="Q8YX97"/>
<dbReference type="STRING" id="103690.gene:10493332"/>
<dbReference type="KEGG" id="ana:all1318"/>
<dbReference type="eggNOG" id="COG0525">
    <property type="taxonomic scope" value="Bacteria"/>
</dbReference>
<dbReference type="OrthoDB" id="9810365at2"/>
<dbReference type="BRENDA" id="6.1.1.9">
    <property type="organism ID" value="8113"/>
</dbReference>
<dbReference type="Proteomes" id="UP000002483">
    <property type="component" value="Chromosome"/>
</dbReference>
<dbReference type="GO" id="GO:0005829">
    <property type="term" value="C:cytosol"/>
    <property type="evidence" value="ECO:0007669"/>
    <property type="project" value="TreeGrafter"/>
</dbReference>
<dbReference type="GO" id="GO:0002161">
    <property type="term" value="F:aminoacyl-tRNA deacylase activity"/>
    <property type="evidence" value="ECO:0007669"/>
    <property type="project" value="InterPro"/>
</dbReference>
<dbReference type="GO" id="GO:0005524">
    <property type="term" value="F:ATP binding"/>
    <property type="evidence" value="ECO:0007669"/>
    <property type="project" value="UniProtKB-UniRule"/>
</dbReference>
<dbReference type="GO" id="GO:0004832">
    <property type="term" value="F:valine-tRNA ligase activity"/>
    <property type="evidence" value="ECO:0007669"/>
    <property type="project" value="UniProtKB-UniRule"/>
</dbReference>
<dbReference type="GO" id="GO:0006438">
    <property type="term" value="P:valyl-tRNA aminoacylation"/>
    <property type="evidence" value="ECO:0007669"/>
    <property type="project" value="UniProtKB-UniRule"/>
</dbReference>
<dbReference type="CDD" id="cd07962">
    <property type="entry name" value="Anticodon_Ia_Val"/>
    <property type="match status" value="1"/>
</dbReference>
<dbReference type="CDD" id="cd00817">
    <property type="entry name" value="ValRS_core"/>
    <property type="match status" value="1"/>
</dbReference>
<dbReference type="FunFam" id="1.10.287.380:FF:000001">
    <property type="entry name" value="Valine--tRNA ligase"/>
    <property type="match status" value="1"/>
</dbReference>
<dbReference type="FunFam" id="3.40.50.620:FF:000032">
    <property type="entry name" value="Valine--tRNA ligase"/>
    <property type="match status" value="1"/>
</dbReference>
<dbReference type="FunFam" id="3.40.50.620:FF:000078">
    <property type="entry name" value="Valine--tRNA ligase, mitochondrial"/>
    <property type="match status" value="1"/>
</dbReference>
<dbReference type="FunFam" id="3.90.740.10:FF:000005">
    <property type="entry name" value="Valine--tRNA ligase, mitochondrial"/>
    <property type="match status" value="1"/>
</dbReference>
<dbReference type="Gene3D" id="3.40.50.620">
    <property type="entry name" value="HUPs"/>
    <property type="match status" value="2"/>
</dbReference>
<dbReference type="Gene3D" id="1.10.730.10">
    <property type="entry name" value="Isoleucyl-tRNA Synthetase, Domain 1"/>
    <property type="match status" value="1"/>
</dbReference>
<dbReference type="Gene3D" id="1.10.287.380">
    <property type="entry name" value="Valyl-tRNA synthetase, C-terminal domain"/>
    <property type="match status" value="1"/>
</dbReference>
<dbReference type="Gene3D" id="3.90.740.10">
    <property type="entry name" value="Valyl/Leucyl/Isoleucyl-tRNA synthetase, editing domain"/>
    <property type="match status" value="1"/>
</dbReference>
<dbReference type="HAMAP" id="MF_02004">
    <property type="entry name" value="Val_tRNA_synth_type1"/>
    <property type="match status" value="1"/>
</dbReference>
<dbReference type="InterPro" id="IPR001412">
    <property type="entry name" value="aa-tRNA-synth_I_CS"/>
</dbReference>
<dbReference type="InterPro" id="IPR002300">
    <property type="entry name" value="aa-tRNA-synth_Ia"/>
</dbReference>
<dbReference type="InterPro" id="IPR033705">
    <property type="entry name" value="Anticodon_Ia_Val"/>
</dbReference>
<dbReference type="InterPro" id="IPR025564">
    <property type="entry name" value="CAAD_dom"/>
</dbReference>
<dbReference type="InterPro" id="IPR013155">
    <property type="entry name" value="M/V/L/I-tRNA-synth_anticd-bd"/>
</dbReference>
<dbReference type="InterPro" id="IPR014729">
    <property type="entry name" value="Rossmann-like_a/b/a_fold"/>
</dbReference>
<dbReference type="InterPro" id="IPR010978">
    <property type="entry name" value="tRNA-bd_arm"/>
</dbReference>
<dbReference type="InterPro" id="IPR009080">
    <property type="entry name" value="tRNAsynth_Ia_anticodon-bd"/>
</dbReference>
<dbReference type="InterPro" id="IPR037118">
    <property type="entry name" value="Val-tRNA_synth_C_sf"/>
</dbReference>
<dbReference type="InterPro" id="IPR019499">
    <property type="entry name" value="Val-tRNA_synth_tRNA-bd"/>
</dbReference>
<dbReference type="InterPro" id="IPR009008">
    <property type="entry name" value="Val/Leu/Ile-tRNA-synth_edit"/>
</dbReference>
<dbReference type="InterPro" id="IPR002303">
    <property type="entry name" value="Valyl-tRNA_ligase"/>
</dbReference>
<dbReference type="NCBIfam" id="NF004349">
    <property type="entry name" value="PRK05729.1"/>
    <property type="match status" value="1"/>
</dbReference>
<dbReference type="NCBIfam" id="TIGR00422">
    <property type="entry name" value="valS"/>
    <property type="match status" value="1"/>
</dbReference>
<dbReference type="PANTHER" id="PTHR11946:SF93">
    <property type="entry name" value="VALINE--TRNA LIGASE, CHLOROPLASTIC_MITOCHONDRIAL 2"/>
    <property type="match status" value="1"/>
</dbReference>
<dbReference type="PANTHER" id="PTHR11946">
    <property type="entry name" value="VALYL-TRNA SYNTHETASES"/>
    <property type="match status" value="1"/>
</dbReference>
<dbReference type="Pfam" id="PF08264">
    <property type="entry name" value="Anticodon_1"/>
    <property type="match status" value="1"/>
</dbReference>
<dbReference type="Pfam" id="PF14159">
    <property type="entry name" value="CAAD"/>
    <property type="match status" value="1"/>
</dbReference>
<dbReference type="Pfam" id="PF00133">
    <property type="entry name" value="tRNA-synt_1"/>
    <property type="match status" value="1"/>
</dbReference>
<dbReference type="Pfam" id="PF10458">
    <property type="entry name" value="Val_tRNA-synt_C"/>
    <property type="match status" value="1"/>
</dbReference>
<dbReference type="PRINTS" id="PR00986">
    <property type="entry name" value="TRNASYNTHVAL"/>
</dbReference>
<dbReference type="SUPFAM" id="SSF47323">
    <property type="entry name" value="Anticodon-binding domain of a subclass of class I aminoacyl-tRNA synthetases"/>
    <property type="match status" value="1"/>
</dbReference>
<dbReference type="SUPFAM" id="SSF52374">
    <property type="entry name" value="Nucleotidylyl transferase"/>
    <property type="match status" value="1"/>
</dbReference>
<dbReference type="SUPFAM" id="SSF46589">
    <property type="entry name" value="tRNA-binding arm"/>
    <property type="match status" value="1"/>
</dbReference>
<dbReference type="SUPFAM" id="SSF50677">
    <property type="entry name" value="ValRS/IleRS/LeuRS editing domain"/>
    <property type="match status" value="1"/>
</dbReference>
<dbReference type="PROSITE" id="PS00178">
    <property type="entry name" value="AA_TRNA_LIGASE_I"/>
    <property type="match status" value="1"/>
</dbReference>
<sequence>MTATITNLPSLYDPFTTEAKWQKFWEENQIYKADPNKGGEPYCVVIPPPNVTGSLHMGHAFESALIDTLVRYHRMQGRNTLWLPGTDHASIAVHTILEKQLKAEGKTRQELGREKFLERSWQWKAESGGTIVNQLRRLGVSVDWSRERFTLDEGLSKAVAEAFVSLYDEGLIYRGEYLVNWCPATQSAVSDVEVESKEVEGNLWHFRYPLTDGSGYVEVATTRPETMLGDTAVAVNPNDDRYKHLIGKTLTLPITQQEIPIISDELVDPAFGTGCVKVTPAHDLNDFEMGKRHNLPFINILNKDGTLNANGGEFAGQDRFVARKNVVSRLETDGFLVKIEDYKHTVPYSDRGKVPVEPLLSTQWFVKIRPLADKSLAFLDEKNSPEFVPQRWTKVYRDWLVNLRDWCISRQLWWGHQIPAWYAVSETNGQITDNTPFVVAKSTNEAWEKAKSQFGENVQLEQDPDVLDTWFSSGLWPFSTLGWPEQTPDLAKYYPTTTLVTGFDIIFFWVARMTMMAGHFTGQMPFQTVYIHGLVRDENNKKMSKSANNGIDPLLLIDKYGTDALRYTLVREVAGAGQDIRLEYDRKKDESPSVEASRNFANKLWNAARFVMMNLDGLSTGDLGLGTGNSQSLELSDGVPPSLADRWIISRYHQVIKQTTHYIDNYGLGEAAKGIYEFIWGDFCDWYIELVKSRLQKDADPLSRKAAQQTLAYVLEGILKLLHPFMPHITEEIWQTLTQQPEDSPQTLALQAYPQADVNLINPALETQFDLLIGTIRTIRNLRAEAEVKPGAKIIANLQTDSESERQILMAGQSYIKDLAKVETLTIAAGQQPSTVTKKKPQKGLKTIGLVIAGLVFLRVALAVADTVDNVPFLGTFFEIVGLGYSAWFVTRNLLSTPARKRFLAKFFAPPTEKNLSGTVQQAPEAAEKSIAGVVGTVQVVIPLAGVVDIETLRAKLERSISKAETEAQSLKGRLSNPKFVDKAPADVVQAARDALAEAEKQVEILRLRLQTLV</sequence>
<accession>Q8YX97</accession>
<keyword id="KW-0030">Aminoacyl-tRNA synthetase</keyword>
<keyword id="KW-0067">ATP-binding</keyword>
<keyword id="KW-0175">Coiled coil</keyword>
<keyword id="KW-0963">Cytoplasm</keyword>
<keyword id="KW-0436">Ligase</keyword>
<keyword id="KW-0547">Nucleotide-binding</keyword>
<keyword id="KW-0648">Protein biosynthesis</keyword>
<keyword id="KW-1185">Reference proteome</keyword>
<gene>
    <name evidence="1" type="primary">valS</name>
    <name type="ordered locus">all1318</name>
</gene>
<protein>
    <recommendedName>
        <fullName evidence="1">Valine--tRNA ligase</fullName>
        <ecNumber evidence="1">6.1.1.9</ecNumber>
    </recommendedName>
    <alternativeName>
        <fullName evidence="1">Valyl-tRNA synthetase</fullName>
        <shortName evidence="1">ValRS</shortName>
    </alternativeName>
</protein>